<keyword id="KW-0028">Amino-acid biosynthesis</keyword>
<keyword id="KW-0057">Aromatic amino acid biosynthesis</keyword>
<keyword id="KW-0521">NADP</keyword>
<keyword id="KW-0560">Oxidoreductase</keyword>
<comment type="function">
    <text evidence="1">Involved in the biosynthesis of the chorismate, which leads to the biosynthesis of aromatic amino acids. Catalyzes the reversible NADPH linked reduction of 3-dehydroshikimate (DHSA) to yield shikimate (SA).</text>
</comment>
<comment type="catalytic activity">
    <reaction evidence="1">
        <text>shikimate + NADP(+) = 3-dehydroshikimate + NADPH + H(+)</text>
        <dbReference type="Rhea" id="RHEA:17737"/>
        <dbReference type="ChEBI" id="CHEBI:15378"/>
        <dbReference type="ChEBI" id="CHEBI:16630"/>
        <dbReference type="ChEBI" id="CHEBI:36208"/>
        <dbReference type="ChEBI" id="CHEBI:57783"/>
        <dbReference type="ChEBI" id="CHEBI:58349"/>
        <dbReference type="EC" id="1.1.1.25"/>
    </reaction>
</comment>
<comment type="pathway">
    <text evidence="1">Metabolic intermediate biosynthesis; chorismate biosynthesis; chorismate from D-erythrose 4-phosphate and phosphoenolpyruvate: step 4/7.</text>
</comment>
<comment type="subunit">
    <text evidence="1">Homodimer.</text>
</comment>
<comment type="similarity">
    <text evidence="1">Belongs to the shikimate dehydrogenase family.</text>
</comment>
<evidence type="ECO:0000255" key="1">
    <source>
        <dbReference type="HAMAP-Rule" id="MF_00222"/>
    </source>
</evidence>
<feature type="chain" id="PRO_1000100106" description="Shikimate dehydrogenase (NADP(+))">
    <location>
        <begin position="1"/>
        <end position="289"/>
    </location>
</feature>
<feature type="active site" description="Proton acceptor" evidence="1">
    <location>
        <position position="73"/>
    </location>
</feature>
<feature type="binding site" evidence="1">
    <location>
        <begin position="22"/>
        <end position="24"/>
    </location>
    <ligand>
        <name>shikimate</name>
        <dbReference type="ChEBI" id="CHEBI:36208"/>
    </ligand>
</feature>
<feature type="binding site" evidence="1">
    <location>
        <position position="69"/>
    </location>
    <ligand>
        <name>shikimate</name>
        <dbReference type="ChEBI" id="CHEBI:36208"/>
    </ligand>
</feature>
<feature type="binding site" evidence="1">
    <location>
        <position position="85"/>
    </location>
    <ligand>
        <name>NADP(+)</name>
        <dbReference type="ChEBI" id="CHEBI:58349"/>
    </ligand>
</feature>
<feature type="binding site" evidence="1">
    <location>
        <position position="94"/>
    </location>
    <ligand>
        <name>shikimate</name>
        <dbReference type="ChEBI" id="CHEBI:36208"/>
    </ligand>
</feature>
<feature type="binding site" evidence="1">
    <location>
        <position position="109"/>
    </location>
    <ligand>
        <name>shikimate</name>
        <dbReference type="ChEBI" id="CHEBI:36208"/>
    </ligand>
</feature>
<feature type="binding site" evidence="1">
    <location>
        <begin position="134"/>
        <end position="138"/>
    </location>
    <ligand>
        <name>NADP(+)</name>
        <dbReference type="ChEBI" id="CHEBI:58349"/>
    </ligand>
</feature>
<feature type="binding site" evidence="1">
    <location>
        <begin position="158"/>
        <end position="163"/>
    </location>
    <ligand>
        <name>NADP(+)</name>
        <dbReference type="ChEBI" id="CHEBI:58349"/>
    </ligand>
</feature>
<feature type="binding site" evidence="1">
    <location>
        <position position="226"/>
    </location>
    <ligand>
        <name>NADP(+)</name>
        <dbReference type="ChEBI" id="CHEBI:58349"/>
    </ligand>
</feature>
<feature type="binding site" evidence="1">
    <location>
        <position position="228"/>
    </location>
    <ligand>
        <name>shikimate</name>
        <dbReference type="ChEBI" id="CHEBI:36208"/>
    </ligand>
</feature>
<feature type="binding site" evidence="1">
    <location>
        <position position="249"/>
    </location>
    <ligand>
        <name>NADP(+)</name>
        <dbReference type="ChEBI" id="CHEBI:58349"/>
    </ligand>
</feature>
<sequence length="289" mass="30520">MDDKSMARGRKAFVTGFPIRHSRSPLIHGFWLKELGIDGSYEAVEVKPEDFSSFAASLAANGFAGGNVTIPHKEAAYAAAESLDEAARAIGAVNTLWLENGRLCGGNTDAYGFAANLDASAPGWDKADRALVLGAGGASRAVVHALLSRGVCHVSVVNRTLSRAEELAAHFGARVYAHSWDEAQALVSNAGLIVNTTALGMSGHGEGQDFPIDLTCAPKEAVATDIVYVPLRTAFLNKAEKAGLKTVDGLGMLLHQAVPGFERWFGQRPQVTQALREHILADMAKAGAL</sequence>
<dbReference type="EC" id="1.1.1.25" evidence="1"/>
<dbReference type="EMBL" id="CP000887">
    <property type="protein sequence ID" value="ACD73420.1"/>
    <property type="molecule type" value="Genomic_DNA"/>
</dbReference>
<dbReference type="RefSeq" id="WP_002967030.1">
    <property type="nucleotide sequence ID" value="NC_010742.1"/>
</dbReference>
<dbReference type="SMR" id="B2S968"/>
<dbReference type="KEGG" id="bmc:BAbS19_I19380"/>
<dbReference type="HOGENOM" id="CLU_044063_2_0_5"/>
<dbReference type="UniPathway" id="UPA00053">
    <property type="reaction ID" value="UER00087"/>
</dbReference>
<dbReference type="Proteomes" id="UP000002565">
    <property type="component" value="Chromosome 1"/>
</dbReference>
<dbReference type="GO" id="GO:0005829">
    <property type="term" value="C:cytosol"/>
    <property type="evidence" value="ECO:0007669"/>
    <property type="project" value="TreeGrafter"/>
</dbReference>
<dbReference type="GO" id="GO:0050661">
    <property type="term" value="F:NADP binding"/>
    <property type="evidence" value="ECO:0007669"/>
    <property type="project" value="InterPro"/>
</dbReference>
<dbReference type="GO" id="GO:0004764">
    <property type="term" value="F:shikimate 3-dehydrogenase (NADP+) activity"/>
    <property type="evidence" value="ECO:0007669"/>
    <property type="project" value="UniProtKB-UniRule"/>
</dbReference>
<dbReference type="GO" id="GO:0008652">
    <property type="term" value="P:amino acid biosynthetic process"/>
    <property type="evidence" value="ECO:0007669"/>
    <property type="project" value="UniProtKB-KW"/>
</dbReference>
<dbReference type="GO" id="GO:0009073">
    <property type="term" value="P:aromatic amino acid family biosynthetic process"/>
    <property type="evidence" value="ECO:0007669"/>
    <property type="project" value="UniProtKB-KW"/>
</dbReference>
<dbReference type="GO" id="GO:0009423">
    <property type="term" value="P:chorismate biosynthetic process"/>
    <property type="evidence" value="ECO:0007669"/>
    <property type="project" value="UniProtKB-UniRule"/>
</dbReference>
<dbReference type="GO" id="GO:0019632">
    <property type="term" value="P:shikimate metabolic process"/>
    <property type="evidence" value="ECO:0007669"/>
    <property type="project" value="InterPro"/>
</dbReference>
<dbReference type="CDD" id="cd01065">
    <property type="entry name" value="NAD_bind_Shikimate_DH"/>
    <property type="match status" value="1"/>
</dbReference>
<dbReference type="Gene3D" id="3.40.50.10860">
    <property type="entry name" value="Leucine Dehydrogenase, chain A, domain 1"/>
    <property type="match status" value="1"/>
</dbReference>
<dbReference type="Gene3D" id="3.40.50.720">
    <property type="entry name" value="NAD(P)-binding Rossmann-like Domain"/>
    <property type="match status" value="1"/>
</dbReference>
<dbReference type="HAMAP" id="MF_00222">
    <property type="entry name" value="Shikimate_DH_AroE"/>
    <property type="match status" value="1"/>
</dbReference>
<dbReference type="InterPro" id="IPR046346">
    <property type="entry name" value="Aminoacid_DH-like_N_sf"/>
</dbReference>
<dbReference type="InterPro" id="IPR036291">
    <property type="entry name" value="NAD(P)-bd_dom_sf"/>
</dbReference>
<dbReference type="InterPro" id="IPR041121">
    <property type="entry name" value="SDH_C"/>
</dbReference>
<dbReference type="InterPro" id="IPR011342">
    <property type="entry name" value="Shikimate_DH"/>
</dbReference>
<dbReference type="InterPro" id="IPR013708">
    <property type="entry name" value="Shikimate_DH-bd_N"/>
</dbReference>
<dbReference type="InterPro" id="IPR022893">
    <property type="entry name" value="Shikimate_DH_fam"/>
</dbReference>
<dbReference type="InterPro" id="IPR006151">
    <property type="entry name" value="Shikm_DH/Glu-tRNA_Rdtase"/>
</dbReference>
<dbReference type="NCBIfam" id="TIGR00507">
    <property type="entry name" value="aroE"/>
    <property type="match status" value="1"/>
</dbReference>
<dbReference type="NCBIfam" id="NF001312">
    <property type="entry name" value="PRK00258.1-4"/>
    <property type="match status" value="1"/>
</dbReference>
<dbReference type="PANTHER" id="PTHR21089:SF1">
    <property type="entry name" value="BIFUNCTIONAL 3-DEHYDROQUINATE DEHYDRATASE_SHIKIMATE DEHYDROGENASE, CHLOROPLASTIC"/>
    <property type="match status" value="1"/>
</dbReference>
<dbReference type="PANTHER" id="PTHR21089">
    <property type="entry name" value="SHIKIMATE DEHYDROGENASE"/>
    <property type="match status" value="1"/>
</dbReference>
<dbReference type="Pfam" id="PF18317">
    <property type="entry name" value="SDH_C"/>
    <property type="match status" value="1"/>
</dbReference>
<dbReference type="Pfam" id="PF01488">
    <property type="entry name" value="Shikimate_DH"/>
    <property type="match status" value="1"/>
</dbReference>
<dbReference type="Pfam" id="PF08501">
    <property type="entry name" value="Shikimate_dh_N"/>
    <property type="match status" value="1"/>
</dbReference>
<dbReference type="SUPFAM" id="SSF53223">
    <property type="entry name" value="Aminoacid dehydrogenase-like, N-terminal domain"/>
    <property type="match status" value="1"/>
</dbReference>
<dbReference type="SUPFAM" id="SSF51735">
    <property type="entry name" value="NAD(P)-binding Rossmann-fold domains"/>
    <property type="match status" value="1"/>
</dbReference>
<protein>
    <recommendedName>
        <fullName evidence="1">Shikimate dehydrogenase (NADP(+))</fullName>
        <shortName evidence="1">SDH</shortName>
        <ecNumber evidence="1">1.1.1.25</ecNumber>
    </recommendedName>
</protein>
<organism>
    <name type="scientific">Brucella abortus (strain S19)</name>
    <dbReference type="NCBI Taxonomy" id="430066"/>
    <lineage>
        <taxon>Bacteria</taxon>
        <taxon>Pseudomonadati</taxon>
        <taxon>Pseudomonadota</taxon>
        <taxon>Alphaproteobacteria</taxon>
        <taxon>Hyphomicrobiales</taxon>
        <taxon>Brucellaceae</taxon>
        <taxon>Brucella/Ochrobactrum group</taxon>
        <taxon>Brucella</taxon>
    </lineage>
</organism>
<reference key="1">
    <citation type="journal article" date="2008" name="PLoS ONE">
        <title>Genome sequence of Brucella abortus vaccine strain S19 compared to virulent strains yields candidate virulence genes.</title>
        <authorList>
            <person name="Crasta O.R."/>
            <person name="Folkerts O."/>
            <person name="Fei Z."/>
            <person name="Mane S.P."/>
            <person name="Evans C."/>
            <person name="Martino-Catt S."/>
            <person name="Bricker B."/>
            <person name="Yu G."/>
            <person name="Du L."/>
            <person name="Sobral B.W."/>
        </authorList>
    </citation>
    <scope>NUCLEOTIDE SEQUENCE [LARGE SCALE GENOMIC DNA]</scope>
    <source>
        <strain>S19</strain>
    </source>
</reference>
<proteinExistence type="inferred from homology"/>
<gene>
    <name evidence="1" type="primary">aroE</name>
    <name type="ordered locus">BAbS19_I19380</name>
</gene>
<name>AROE_BRUA1</name>
<accession>B2S968</accession>